<protein>
    <recommendedName>
        <fullName>Interleukin-5 receptor subunit alpha</fullName>
        <shortName>IL-5 receptor subunit alpha</shortName>
        <shortName>IL-5R subunit alpha</shortName>
        <shortName>IL-5R-alpha</shortName>
        <shortName>IL-5RA</shortName>
    </recommendedName>
    <alternativeName>
        <fullName>CDw125</fullName>
    </alternativeName>
    <cdAntigenName>CD125</cdAntigenName>
</protein>
<comment type="function">
    <text evidence="4 7 8 9">Cell surface receptor that plays an important role in the survival, differentiation, and chemotaxis of eosinophils (PubMed:9378992). Acts by forming a heterodimeric receptor with CSF2RB subunit and subsequently binding to interleukin-5 (PubMed:1495999, PubMed:22528658). In unstimulated conditions, interacts constitutively with JAK2. Heterodimeric receptor activation leads to JAK2 stimulation and subsequent activation of the JAK-STAT pathway (PubMed:9516124).</text>
</comment>
<comment type="subunit">
    <text evidence="3 4 6 7">Interacts with IL5 (PubMed:1495999, PubMed:22153509, PubMed:22528658). Interacts with CSF2RB (PubMed:9516124). Interacts with JAK2 (PubMed:9516124). Interacts with SDCBP (PubMed:12842047).</text>
</comment>
<comment type="interaction">
    <interactant intactId="EBI-1759442">
        <id>Q01344</id>
    </interactant>
    <interactant intactId="EBI-1809771">
        <id>P32927</id>
        <label>CSF2RB</label>
    </interactant>
    <organismsDiffer>false</organismsDiffer>
    <experiments>3</experiments>
</comment>
<comment type="interaction">
    <interactant intactId="EBI-1759442">
        <id>Q01344</id>
    </interactant>
    <interactant intactId="EBI-2435811">
        <id>P05113</id>
        <label>IL5</label>
    </interactant>
    <organismsDiffer>false</organismsDiffer>
    <experiments>2</experiments>
</comment>
<comment type="interaction">
    <interactant intactId="EBI-1759442">
        <id>Q01344</id>
    </interactant>
    <interactant intactId="EBI-518647">
        <id>O60674</id>
        <label>JAK2</label>
    </interactant>
    <organismsDiffer>false</organismsDiffer>
    <experiments>2</experiments>
</comment>
<comment type="interaction">
    <interactant intactId="EBI-1759442">
        <id>Q01344</id>
    </interactant>
    <interactant intactId="EBI-727004">
        <id>O00560</id>
        <label>SDCBP</label>
    </interactant>
    <organismsDiffer>false</organismsDiffer>
    <experiments>2</experiments>
</comment>
<comment type="interaction">
    <interactant intactId="EBI-15957545">
        <id>Q01344-2</id>
    </interactant>
    <interactant intactId="EBI-2435811">
        <id>P05113</id>
        <label>IL5</label>
    </interactant>
    <organismsDiffer>false</organismsDiffer>
    <experiments>4</experiments>
</comment>
<comment type="subcellular location">
    <subcellularLocation>
        <location>Membrane</location>
        <topology>Single-pass type I membrane protein</topology>
    </subcellularLocation>
</comment>
<comment type="alternative products">
    <event type="alternative splicing"/>
    <isoform>
        <id>Q01344-1</id>
        <name>1</name>
        <name>Membrane-bound</name>
        <sequence type="displayed"/>
    </isoform>
    <isoform>
        <id>Q01344-2</id>
        <name>2</name>
        <name>Soluble-S1</name>
        <sequence type="described" ref="VSP_001678 VSP_001679"/>
    </isoform>
    <isoform>
        <id>Q01344-3</id>
        <name>3</name>
        <name>Soluble-S2</name>
        <sequence type="described" ref="VSP_001680 VSP_001681"/>
    </isoform>
    <isoform>
        <id>Q01344-4</id>
        <name>4</name>
        <sequence type="described" ref="VSP_046742"/>
    </isoform>
    <isoform>
        <id>Q01344-5</id>
        <name>5</name>
        <sequence type="described" ref="VSP_047762"/>
    </isoform>
</comment>
<comment type="tissue specificity">
    <text>Expressed on eosinophils and basophils.</text>
</comment>
<comment type="domain">
    <text>The WSXWS motif appears to be necessary for proper protein folding and thereby efficient intracellular transport and cell-surface receptor binding.</text>
</comment>
<comment type="domain">
    <text>The box 1 motif is required for JAK interaction and/or activation.</text>
</comment>
<comment type="similarity">
    <text evidence="16">Belongs to the type I cytokine receptor family. Type 5 subfamily.</text>
</comment>
<organism>
    <name type="scientific">Homo sapiens</name>
    <name type="common">Human</name>
    <dbReference type="NCBI Taxonomy" id="9606"/>
    <lineage>
        <taxon>Eukaryota</taxon>
        <taxon>Metazoa</taxon>
        <taxon>Chordata</taxon>
        <taxon>Craniata</taxon>
        <taxon>Vertebrata</taxon>
        <taxon>Euteleostomi</taxon>
        <taxon>Mammalia</taxon>
        <taxon>Eutheria</taxon>
        <taxon>Euarchontoglires</taxon>
        <taxon>Primates</taxon>
        <taxon>Haplorrhini</taxon>
        <taxon>Catarrhini</taxon>
        <taxon>Hominidae</taxon>
        <taxon>Homo</taxon>
    </lineage>
</organism>
<keyword id="KW-0002">3D-structure</keyword>
<keyword id="KW-0025">Alternative splicing</keyword>
<keyword id="KW-1015">Disulfide bond</keyword>
<keyword id="KW-0325">Glycoprotein</keyword>
<keyword id="KW-0472">Membrane</keyword>
<keyword id="KW-1267">Proteomics identification</keyword>
<keyword id="KW-0675">Receptor</keyword>
<keyword id="KW-1185">Reference proteome</keyword>
<keyword id="KW-0677">Repeat</keyword>
<keyword id="KW-0732">Signal</keyword>
<keyword id="KW-0812">Transmembrane</keyword>
<keyword id="KW-1133">Transmembrane helix</keyword>
<evidence type="ECO:0000255" key="1"/>
<evidence type="ECO:0000255" key="2">
    <source>
        <dbReference type="PROSITE-ProRule" id="PRU00316"/>
    </source>
</evidence>
<evidence type="ECO:0000269" key="3">
    <source>
    </source>
</evidence>
<evidence type="ECO:0000269" key="4">
    <source>
    </source>
</evidence>
<evidence type="ECO:0000269" key="5">
    <source>
    </source>
</evidence>
<evidence type="ECO:0000269" key="6">
    <source>
    </source>
</evidence>
<evidence type="ECO:0000269" key="7">
    <source>
    </source>
</evidence>
<evidence type="ECO:0000269" key="8">
    <source>
    </source>
</evidence>
<evidence type="ECO:0000269" key="9">
    <source>
    </source>
</evidence>
<evidence type="ECO:0000269" key="10">
    <source ref="6"/>
</evidence>
<evidence type="ECO:0000303" key="11">
    <source>
    </source>
</evidence>
<evidence type="ECO:0000303" key="12">
    <source>
    </source>
</evidence>
<evidence type="ECO:0000303" key="13">
    <source>
    </source>
</evidence>
<evidence type="ECO:0000303" key="14">
    <source>
    </source>
</evidence>
<evidence type="ECO:0000303" key="15">
    <source ref="4"/>
</evidence>
<evidence type="ECO:0000305" key="16"/>
<evidence type="ECO:0007744" key="17">
    <source>
        <dbReference type="PDB" id="3VA2"/>
    </source>
</evidence>
<evidence type="ECO:0007829" key="18">
    <source>
        <dbReference type="PDB" id="3QT2"/>
    </source>
</evidence>
<evidence type="ECO:0007829" key="19">
    <source>
        <dbReference type="PDB" id="3VA2"/>
    </source>
</evidence>
<evidence type="ECO:0007829" key="20">
    <source>
        <dbReference type="PDB" id="6H41"/>
    </source>
</evidence>
<gene>
    <name type="primary">IL5RA</name>
    <name type="synonym">IL5R</name>
</gene>
<proteinExistence type="evidence at protein level"/>
<sequence>MIIVAHVLLILLGATEILQADLLPDEKISLLPPVNFTIKVTGLAQVLLQWKPNPDQEQRNVNLEYQVKINAPKEDDYETRITESKCVTILHKGFSASVRTILQNDHSLLASSWASAELHAPPGSPGTSIVNLTCTTNTTEDNYSRLRSYQVSLHCTWLVGTDAPEDTQYFLYYRYGSWTEECQEYSKDTLGRNIACWFPRTFILSKGRDWLAVLVNGSSKHSAIRPFDQLFALHAIDQINPPLNVTAEIEGTRLSIQWEKPVSAFPIHCFDYEVKIHNTRNGYLQIEKLMTNAFISIIDDLSKYDVQVRAAVSSMCREAGLWSEWSQPIYVGNDEHKPLREWFVIVIMATICFILLILSLICKICHLWIKLFPPIPAPKSNIKDLFVTTNYEKAGSSETEIEVICYIEKPGVETLEDSVF</sequence>
<name>IL5RA_HUMAN</name>
<dbReference type="EMBL" id="M75914">
    <property type="protein sequence ID" value="AAA36110.1"/>
    <property type="molecule type" value="mRNA"/>
</dbReference>
<dbReference type="EMBL" id="X61176">
    <property type="protein sequence ID" value="CAA43483.1"/>
    <property type="molecule type" value="mRNA"/>
</dbReference>
<dbReference type="EMBL" id="X62156">
    <property type="protein sequence ID" value="CAA44081.1"/>
    <property type="molecule type" value="mRNA"/>
</dbReference>
<dbReference type="EMBL" id="M96651">
    <property type="protein sequence ID" value="AAA59151.1"/>
    <property type="molecule type" value="mRNA"/>
</dbReference>
<dbReference type="EMBL" id="M96652">
    <property type="protein sequence ID" value="AAA59152.1"/>
    <property type="molecule type" value="mRNA"/>
</dbReference>
<dbReference type="EMBL" id="AB288090">
    <property type="protein sequence ID" value="BAG49562.1"/>
    <property type="molecule type" value="mRNA"/>
</dbReference>
<dbReference type="EMBL" id="AK304256">
    <property type="protein sequence ID" value="BAG65122.1"/>
    <property type="molecule type" value="mRNA"/>
</dbReference>
<dbReference type="EMBL" id="AY642135">
    <property type="protein sequence ID" value="AAT45457.1"/>
    <property type="molecule type" value="Genomic_DNA"/>
</dbReference>
<dbReference type="EMBL" id="AC022002">
    <property type="status" value="NOT_ANNOTATED_CDS"/>
    <property type="molecule type" value="Genomic_DNA"/>
</dbReference>
<dbReference type="EMBL" id="AC024060">
    <property type="status" value="NOT_ANNOTATED_CDS"/>
    <property type="molecule type" value="Genomic_DNA"/>
</dbReference>
<dbReference type="CCDS" id="CCDS2559.1">
    <molecule id="Q01344-1"/>
</dbReference>
<dbReference type="CCDS" id="CCDS2560.1">
    <molecule id="Q01344-2"/>
</dbReference>
<dbReference type="CCDS" id="CCDS46739.1">
    <molecule id="Q01344-3"/>
</dbReference>
<dbReference type="CCDS" id="CCDS58813.1">
    <molecule id="Q01344-4"/>
</dbReference>
<dbReference type="PIR" id="A40267">
    <property type="entry name" value="A40267"/>
</dbReference>
<dbReference type="RefSeq" id="NP_000555.2">
    <molecule id="Q01344-1"/>
    <property type="nucleotide sequence ID" value="NM_000564.4"/>
</dbReference>
<dbReference type="RefSeq" id="NP_001230028.1">
    <molecule id="Q01344-4"/>
    <property type="nucleotide sequence ID" value="NM_001243099.2"/>
</dbReference>
<dbReference type="RefSeq" id="NP_783851.1">
    <molecule id="Q01344-3"/>
    <property type="nucleotide sequence ID" value="NM_175724.2"/>
</dbReference>
<dbReference type="RefSeq" id="NP_783852.1">
    <molecule id="Q01344-2"/>
    <property type="nucleotide sequence ID" value="NM_175725.3"/>
</dbReference>
<dbReference type="RefSeq" id="NP_783853.1">
    <molecule id="Q01344-1"/>
    <property type="nucleotide sequence ID" value="NM_175726.4"/>
</dbReference>
<dbReference type="RefSeq" id="NP_783854.1">
    <molecule id="Q01344-3"/>
    <property type="nucleotide sequence ID" value="NM_175727.2"/>
</dbReference>
<dbReference type="RefSeq" id="NP_783855.1">
    <molecule id="Q01344-2"/>
    <property type="nucleotide sequence ID" value="NM_175728.3"/>
</dbReference>
<dbReference type="PDB" id="1OBX">
    <property type="method" value="X-ray"/>
    <property type="resolution" value="1.35 A"/>
    <property type="chains" value="B=413-420"/>
</dbReference>
<dbReference type="PDB" id="1OBZ">
    <property type="method" value="X-ray"/>
    <property type="resolution" value="1.69 A"/>
    <property type="chains" value="P=413-420"/>
</dbReference>
<dbReference type="PDB" id="3QT2">
    <property type="method" value="X-ray"/>
    <property type="resolution" value="2.55 A"/>
    <property type="chains" value="A/B=20-335"/>
</dbReference>
<dbReference type="PDB" id="3VA2">
    <property type="method" value="X-ray"/>
    <property type="resolution" value="2.70 A"/>
    <property type="chains" value="C=21-335"/>
</dbReference>
<dbReference type="PDB" id="6H41">
    <property type="method" value="X-ray"/>
    <property type="resolution" value="2.75 A"/>
    <property type="chains" value="A=27-332"/>
</dbReference>
<dbReference type="PDB" id="8TLD">
    <property type="method" value="EM"/>
    <property type="resolution" value="3.60 A"/>
    <property type="chains" value="F=21-341"/>
</dbReference>
<dbReference type="PDBsum" id="1OBX"/>
<dbReference type="PDBsum" id="1OBZ"/>
<dbReference type="PDBsum" id="3QT2"/>
<dbReference type="PDBsum" id="3VA2"/>
<dbReference type="PDBsum" id="6H41"/>
<dbReference type="PDBsum" id="8TLD"/>
<dbReference type="EMDB" id="EMD-41367"/>
<dbReference type="SMR" id="Q01344"/>
<dbReference type="BioGRID" id="109782">
    <property type="interactions" value="143"/>
</dbReference>
<dbReference type="ComplexPortal" id="CPX-506">
    <property type="entry name" value="Interleukin-5 receptor-ligand complex"/>
</dbReference>
<dbReference type="CORUM" id="Q01344"/>
<dbReference type="DIP" id="DIP-3510N"/>
<dbReference type="ELM" id="Q01344"/>
<dbReference type="FunCoup" id="Q01344">
    <property type="interactions" value="475"/>
</dbReference>
<dbReference type="IntAct" id="Q01344">
    <property type="interactions" value="122"/>
</dbReference>
<dbReference type="STRING" id="9606.ENSP00000412209"/>
<dbReference type="ChEMBL" id="CHEMBL3580483"/>
<dbReference type="DrugBank" id="DB12023">
    <property type="generic name" value="Benralizumab"/>
</dbReference>
<dbReference type="DrugBank" id="DB01093">
    <property type="generic name" value="Dimethyl sulfoxide"/>
</dbReference>
<dbReference type="DrugCentral" id="Q01344"/>
<dbReference type="GuidetoPHARMACOLOGY" id="1706"/>
<dbReference type="GlyCosmos" id="Q01344">
    <property type="glycosylation" value="4 sites, No reported glycans"/>
</dbReference>
<dbReference type="GlyGen" id="Q01344">
    <property type="glycosylation" value="4 sites"/>
</dbReference>
<dbReference type="iPTMnet" id="Q01344"/>
<dbReference type="PhosphoSitePlus" id="Q01344"/>
<dbReference type="BioMuta" id="IL5RA"/>
<dbReference type="DMDM" id="116242525"/>
<dbReference type="MassIVE" id="Q01344"/>
<dbReference type="PaxDb" id="9606-ENSP00000412209"/>
<dbReference type="PeptideAtlas" id="Q01344"/>
<dbReference type="ProteomicsDB" id="57939">
    <molecule id="Q01344-1"/>
</dbReference>
<dbReference type="ProteomicsDB" id="57940">
    <molecule id="Q01344-2"/>
</dbReference>
<dbReference type="ProteomicsDB" id="57941">
    <molecule id="Q01344-3"/>
</dbReference>
<dbReference type="ProteomicsDB" id="5815"/>
<dbReference type="ABCD" id="Q01344">
    <property type="antibodies" value="1 sequenced antibody"/>
</dbReference>
<dbReference type="Antibodypedia" id="2274">
    <property type="antibodies" value="420 antibodies from 36 providers"/>
</dbReference>
<dbReference type="DNASU" id="3568"/>
<dbReference type="Ensembl" id="ENST00000256452.7">
    <molecule id="Q01344-1"/>
    <property type="protein sequence ID" value="ENSP00000256452.3"/>
    <property type="gene ID" value="ENSG00000091181.20"/>
</dbReference>
<dbReference type="Ensembl" id="ENST00000311981.12">
    <molecule id="Q01344-2"/>
    <property type="protein sequence ID" value="ENSP00000309196.8"/>
    <property type="gene ID" value="ENSG00000091181.20"/>
</dbReference>
<dbReference type="Ensembl" id="ENST00000383846.5">
    <molecule id="Q01344-2"/>
    <property type="protein sequence ID" value="ENSP00000373358.1"/>
    <property type="gene ID" value="ENSG00000091181.20"/>
</dbReference>
<dbReference type="Ensembl" id="ENST00000430514.6">
    <molecule id="Q01344-3"/>
    <property type="protein sequence ID" value="ENSP00000400400.2"/>
    <property type="gene ID" value="ENSG00000091181.20"/>
</dbReference>
<dbReference type="Ensembl" id="ENST00000438560.5">
    <molecule id="Q01344-4"/>
    <property type="protein sequence ID" value="ENSP00000390753.1"/>
    <property type="gene ID" value="ENSG00000091181.20"/>
</dbReference>
<dbReference type="Ensembl" id="ENST00000446632.7">
    <molecule id="Q01344-1"/>
    <property type="protein sequence ID" value="ENSP00000412209.2"/>
    <property type="gene ID" value="ENSG00000091181.20"/>
</dbReference>
<dbReference type="Ensembl" id="ENST00000456302.5">
    <molecule id="Q01344-3"/>
    <property type="protein sequence ID" value="ENSP00000392059.1"/>
    <property type="gene ID" value="ENSG00000091181.20"/>
</dbReference>
<dbReference type="GeneID" id="3568"/>
<dbReference type="KEGG" id="hsa:3568"/>
<dbReference type="MANE-Select" id="ENST00000446632.7">
    <property type="protein sequence ID" value="ENSP00000412209.2"/>
    <property type="RefSeq nucleotide sequence ID" value="NM_175726.4"/>
    <property type="RefSeq protein sequence ID" value="NP_783853.1"/>
</dbReference>
<dbReference type="UCSC" id="uc010hbs.4">
    <molecule id="Q01344-1"/>
    <property type="organism name" value="human"/>
</dbReference>
<dbReference type="AGR" id="HGNC:6017"/>
<dbReference type="CTD" id="3568"/>
<dbReference type="DisGeNET" id="3568"/>
<dbReference type="GeneCards" id="IL5RA"/>
<dbReference type="HGNC" id="HGNC:6017">
    <property type="gene designation" value="IL5RA"/>
</dbReference>
<dbReference type="HPA" id="ENSG00000091181">
    <property type="expression patterns" value="Tissue enhanced (choroid plexus, fallopian tube)"/>
</dbReference>
<dbReference type="MIM" id="147851">
    <property type="type" value="gene"/>
</dbReference>
<dbReference type="neXtProt" id="NX_Q01344"/>
<dbReference type="OpenTargets" id="ENSG00000091181"/>
<dbReference type="PharmGKB" id="PA29834"/>
<dbReference type="VEuPathDB" id="HostDB:ENSG00000091181"/>
<dbReference type="eggNOG" id="ENOG502QZNV">
    <property type="taxonomic scope" value="Eukaryota"/>
</dbReference>
<dbReference type="GeneTree" id="ENSGT00940000160890"/>
<dbReference type="HOGENOM" id="CLU_039945_0_0_1"/>
<dbReference type="InParanoid" id="Q01344"/>
<dbReference type="OMA" id="NKFRDPF"/>
<dbReference type="OrthoDB" id="9890439at2759"/>
<dbReference type="PAN-GO" id="Q01344">
    <property type="GO annotations" value="5 GO annotations based on evolutionary models"/>
</dbReference>
<dbReference type="PhylomeDB" id="Q01344"/>
<dbReference type="TreeFam" id="TF331549"/>
<dbReference type="PathwayCommons" id="Q01344"/>
<dbReference type="Reactome" id="R-HSA-512988">
    <property type="pathway name" value="Interleukin-3, Interleukin-5 and GM-CSF signaling"/>
</dbReference>
<dbReference type="Reactome" id="R-HSA-5673001">
    <property type="pathway name" value="RAF/MAP kinase cascade"/>
</dbReference>
<dbReference type="Reactome" id="R-HSA-912526">
    <property type="pathway name" value="Interleukin receptor SHC signaling"/>
</dbReference>
<dbReference type="SignaLink" id="Q01344"/>
<dbReference type="SIGNOR" id="Q01344"/>
<dbReference type="BioGRID-ORCS" id="3568">
    <property type="hits" value="9 hits in 1141 CRISPR screens"/>
</dbReference>
<dbReference type="ChiTaRS" id="IL5RA">
    <property type="organism name" value="human"/>
</dbReference>
<dbReference type="EvolutionaryTrace" id="Q01344"/>
<dbReference type="GeneWiki" id="Interleukin_5_receptor_alpha_subunit"/>
<dbReference type="GenomeRNAi" id="3568"/>
<dbReference type="Pharos" id="Q01344">
    <property type="development level" value="Tclin"/>
</dbReference>
<dbReference type="PRO" id="PR:Q01344"/>
<dbReference type="Proteomes" id="UP000005640">
    <property type="component" value="Chromosome 3"/>
</dbReference>
<dbReference type="RNAct" id="Q01344">
    <property type="molecule type" value="protein"/>
</dbReference>
<dbReference type="Bgee" id="ENSG00000091181">
    <property type="expression patterns" value="Expressed in right uterine tube and 111 other cell types or tissues"/>
</dbReference>
<dbReference type="ExpressionAtlas" id="Q01344">
    <property type="expression patterns" value="baseline and differential"/>
</dbReference>
<dbReference type="GO" id="GO:0009897">
    <property type="term" value="C:external side of plasma membrane"/>
    <property type="evidence" value="ECO:0000318"/>
    <property type="project" value="GO_Central"/>
</dbReference>
<dbReference type="GO" id="GO:0005615">
    <property type="term" value="C:extracellular space"/>
    <property type="evidence" value="ECO:0000304"/>
    <property type="project" value="ProtInc"/>
</dbReference>
<dbReference type="GO" id="GO:0016020">
    <property type="term" value="C:membrane"/>
    <property type="evidence" value="ECO:0000304"/>
    <property type="project" value="ProtInc"/>
</dbReference>
<dbReference type="GO" id="GO:0005886">
    <property type="term" value="C:plasma membrane"/>
    <property type="evidence" value="ECO:0000314"/>
    <property type="project" value="UniProt"/>
</dbReference>
<dbReference type="GO" id="GO:0043235">
    <property type="term" value="C:receptor complex"/>
    <property type="evidence" value="ECO:0000318"/>
    <property type="project" value="GO_Central"/>
</dbReference>
<dbReference type="GO" id="GO:0019955">
    <property type="term" value="F:cytokine binding"/>
    <property type="evidence" value="ECO:0000318"/>
    <property type="project" value="GO_Central"/>
</dbReference>
<dbReference type="GO" id="GO:0004896">
    <property type="term" value="F:cytokine receptor activity"/>
    <property type="evidence" value="ECO:0000318"/>
    <property type="project" value="GO_Central"/>
</dbReference>
<dbReference type="GO" id="GO:0004914">
    <property type="term" value="F:interleukin-5 receptor activity"/>
    <property type="evidence" value="ECO:0000314"/>
    <property type="project" value="UniProt"/>
</dbReference>
<dbReference type="GO" id="GO:0019221">
    <property type="term" value="P:cytokine-mediated signaling pathway"/>
    <property type="evidence" value="ECO:0000318"/>
    <property type="project" value="GO_Central"/>
</dbReference>
<dbReference type="GO" id="GO:0002437">
    <property type="term" value="P:inflammatory response to antigenic stimulus"/>
    <property type="evidence" value="ECO:0007669"/>
    <property type="project" value="Ensembl"/>
</dbReference>
<dbReference type="GO" id="GO:0038043">
    <property type="term" value="P:interleukin-5-mediated signaling pathway"/>
    <property type="evidence" value="ECO:0000314"/>
    <property type="project" value="UniProt"/>
</dbReference>
<dbReference type="GO" id="GO:0008284">
    <property type="term" value="P:positive regulation of cell population proliferation"/>
    <property type="evidence" value="ECO:0000318"/>
    <property type="project" value="GO_Central"/>
</dbReference>
<dbReference type="GO" id="GO:0070665">
    <property type="term" value="P:positive regulation of leukocyte proliferation"/>
    <property type="evidence" value="ECO:0000304"/>
    <property type="project" value="GO_Central"/>
</dbReference>
<dbReference type="GO" id="GO:0032674">
    <property type="term" value="P:regulation of interleukin-5 production"/>
    <property type="evidence" value="ECO:0007669"/>
    <property type="project" value="Ensembl"/>
</dbReference>
<dbReference type="GO" id="GO:0007165">
    <property type="term" value="P:signal transduction"/>
    <property type="evidence" value="ECO:0000304"/>
    <property type="project" value="ProtInc"/>
</dbReference>
<dbReference type="FunFam" id="2.60.40.10:FF:000741">
    <property type="entry name" value="Interleukin 5 receptor subunit alpha"/>
    <property type="match status" value="1"/>
</dbReference>
<dbReference type="FunFam" id="2.60.40.10:FF:000755">
    <property type="entry name" value="Interleukin 5 receptor subunit alpha"/>
    <property type="match status" value="1"/>
</dbReference>
<dbReference type="FunFam" id="2.60.40.10:FF:000818">
    <property type="entry name" value="Interleukin 5 receptor subunit alpha"/>
    <property type="match status" value="1"/>
</dbReference>
<dbReference type="Gene3D" id="2.60.40.10">
    <property type="entry name" value="Immunoglobulins"/>
    <property type="match status" value="3"/>
</dbReference>
<dbReference type="InterPro" id="IPR003961">
    <property type="entry name" value="FN3_dom"/>
</dbReference>
<dbReference type="InterPro" id="IPR036116">
    <property type="entry name" value="FN3_sf"/>
</dbReference>
<dbReference type="InterPro" id="IPR013783">
    <property type="entry name" value="Ig-like_fold"/>
</dbReference>
<dbReference type="InterPro" id="IPR003532">
    <property type="entry name" value="Short_hematopoietin_rcpt_2_CS"/>
</dbReference>
<dbReference type="InterPro" id="IPR015321">
    <property type="entry name" value="TypeI_recpt_CBD"/>
</dbReference>
<dbReference type="PANTHER" id="PTHR23037">
    <property type="entry name" value="CYTOKINE RECEPTOR"/>
    <property type="match status" value="1"/>
</dbReference>
<dbReference type="PANTHER" id="PTHR23037:SF28">
    <property type="entry name" value="ERYTHROPOIETIN RECEPTOR"/>
    <property type="match status" value="1"/>
</dbReference>
<dbReference type="Pfam" id="PF09240">
    <property type="entry name" value="IL6Ra-bind"/>
    <property type="match status" value="1"/>
</dbReference>
<dbReference type="SUPFAM" id="SSF49265">
    <property type="entry name" value="Fibronectin type III"/>
    <property type="match status" value="2"/>
</dbReference>
<dbReference type="PROSITE" id="PS50853">
    <property type="entry name" value="FN3"/>
    <property type="match status" value="2"/>
</dbReference>
<dbReference type="PROSITE" id="PS01356">
    <property type="entry name" value="HEMATOPO_REC_S_F2"/>
    <property type="match status" value="1"/>
</dbReference>
<accession>Q01344</accession>
<accession>B3IU77</accession>
<accession>B4E2G0</accession>
<accession>Q14633</accession>
<accession>Q15469</accession>
<accession>Q6ISX9</accession>
<reference key="1">
    <citation type="journal article" date="1991" name="Cell">
        <title>A human high affinity interleukin-5 receptor (IL5R) is composed of an IL5-specific alpha chain and a beta chain shared with the receptor for GM-CSF.</title>
        <authorList>
            <person name="Tavernier J."/>
            <person name="Devos R."/>
            <person name="Cornelis S."/>
            <person name="Tuypens T."/>
            <person name="van der Heyden J."/>
            <person name="Fiers W."/>
            <person name="Plaetinck G."/>
        </authorList>
    </citation>
    <scope>NUCLEOTIDE SEQUENCE [MRNA] (ISOFORM 2)</scope>
</reference>
<reference key="2">
    <citation type="journal article" date="1992" name="J. Exp. Med.">
        <title>Molecular cloning and expression of the human interleukin 5 receptor.</title>
        <authorList>
            <person name="Murata Y."/>
            <person name="Takaki S."/>
            <person name="Migita M."/>
            <person name="Kikuchi Y."/>
            <person name="Tominaga A."/>
            <person name="Takatsu K."/>
        </authorList>
    </citation>
    <scope>NUCLEOTIDE SEQUENCE [MRNA] (ISOFORMS 1 AND 3)</scope>
    <scope>VARIANT VAL-129</scope>
    <source>
        <tissue>Peripheral blood</tissue>
    </source>
</reference>
<reference key="3">
    <citation type="journal article" date="1992" name="Proc. Natl. Acad. Sci. U.S.A.">
        <title>Molecular basis of the membrane-anchored and two soluble isoforms of the human interleukin 5 receptor alpha subunit.</title>
        <authorList>
            <person name="Tavernier J."/>
            <person name="Tuypens T."/>
            <person name="Plaetinck G."/>
            <person name="Verhee A."/>
            <person name="Fiers W."/>
            <person name="Devos R."/>
        </authorList>
    </citation>
    <scope>NUCLEOTIDE SEQUENCE [MRNA] (ISOFORMS 1 AND 3)</scope>
    <scope>INTERACTION WITH IL5 AND CSF2RB</scope>
    <scope>FUNCTION</scope>
</reference>
<reference key="4">
    <citation type="submission" date="2006-12" db="EMBL/GenBank/DDBJ databases">
        <title>Isolation of the variants for human interleukin-5 receptor alpha subunit.</title>
        <authorList>
            <person name="Ishihara K."/>
            <person name="Yamada M."/>
            <person name="Hirasawa N."/>
            <person name="Ohuchi K."/>
        </authorList>
    </citation>
    <scope>NUCLEOTIDE SEQUENCE [MRNA] (ISOFORM 5)</scope>
</reference>
<reference key="5">
    <citation type="journal article" date="2004" name="Nat. Genet.">
        <title>Complete sequencing and characterization of 21,243 full-length human cDNAs.</title>
        <authorList>
            <person name="Ota T."/>
            <person name="Suzuki Y."/>
            <person name="Nishikawa T."/>
            <person name="Otsuki T."/>
            <person name="Sugiyama T."/>
            <person name="Irie R."/>
            <person name="Wakamatsu A."/>
            <person name="Hayashi K."/>
            <person name="Sato H."/>
            <person name="Nagai K."/>
            <person name="Kimura K."/>
            <person name="Makita H."/>
            <person name="Sekine M."/>
            <person name="Obayashi M."/>
            <person name="Nishi T."/>
            <person name="Shibahara T."/>
            <person name="Tanaka T."/>
            <person name="Ishii S."/>
            <person name="Yamamoto J."/>
            <person name="Saito K."/>
            <person name="Kawai Y."/>
            <person name="Isono Y."/>
            <person name="Nakamura Y."/>
            <person name="Nagahari K."/>
            <person name="Murakami K."/>
            <person name="Yasuda T."/>
            <person name="Iwayanagi T."/>
            <person name="Wagatsuma M."/>
            <person name="Shiratori A."/>
            <person name="Sudo H."/>
            <person name="Hosoiri T."/>
            <person name="Kaku Y."/>
            <person name="Kodaira H."/>
            <person name="Kondo H."/>
            <person name="Sugawara M."/>
            <person name="Takahashi M."/>
            <person name="Kanda K."/>
            <person name="Yokoi T."/>
            <person name="Furuya T."/>
            <person name="Kikkawa E."/>
            <person name="Omura Y."/>
            <person name="Abe K."/>
            <person name="Kamihara K."/>
            <person name="Katsuta N."/>
            <person name="Sato K."/>
            <person name="Tanikawa M."/>
            <person name="Yamazaki M."/>
            <person name="Ninomiya K."/>
            <person name="Ishibashi T."/>
            <person name="Yamashita H."/>
            <person name="Murakawa K."/>
            <person name="Fujimori K."/>
            <person name="Tanai H."/>
            <person name="Kimata M."/>
            <person name="Watanabe M."/>
            <person name="Hiraoka S."/>
            <person name="Chiba Y."/>
            <person name="Ishida S."/>
            <person name="Ono Y."/>
            <person name="Takiguchi S."/>
            <person name="Watanabe S."/>
            <person name="Yosida M."/>
            <person name="Hotuta T."/>
            <person name="Kusano J."/>
            <person name="Kanehori K."/>
            <person name="Takahashi-Fujii A."/>
            <person name="Hara H."/>
            <person name="Tanase T.-O."/>
            <person name="Nomura Y."/>
            <person name="Togiya S."/>
            <person name="Komai F."/>
            <person name="Hara R."/>
            <person name="Takeuchi K."/>
            <person name="Arita M."/>
            <person name="Imose N."/>
            <person name="Musashino K."/>
            <person name="Yuuki H."/>
            <person name="Oshima A."/>
            <person name="Sasaki N."/>
            <person name="Aotsuka S."/>
            <person name="Yoshikawa Y."/>
            <person name="Matsunawa H."/>
            <person name="Ichihara T."/>
            <person name="Shiohata N."/>
            <person name="Sano S."/>
            <person name="Moriya S."/>
            <person name="Momiyama H."/>
            <person name="Satoh N."/>
            <person name="Takami S."/>
            <person name="Terashima Y."/>
            <person name="Suzuki O."/>
            <person name="Nakagawa S."/>
            <person name="Senoh A."/>
            <person name="Mizoguchi H."/>
            <person name="Goto Y."/>
            <person name="Shimizu F."/>
            <person name="Wakebe H."/>
            <person name="Hishigaki H."/>
            <person name="Watanabe T."/>
            <person name="Sugiyama A."/>
            <person name="Takemoto M."/>
            <person name="Kawakami B."/>
            <person name="Yamazaki M."/>
            <person name="Watanabe K."/>
            <person name="Kumagai A."/>
            <person name="Itakura S."/>
            <person name="Fukuzumi Y."/>
            <person name="Fujimori Y."/>
            <person name="Komiyama M."/>
            <person name="Tashiro H."/>
            <person name="Tanigami A."/>
            <person name="Fujiwara T."/>
            <person name="Ono T."/>
            <person name="Yamada K."/>
            <person name="Fujii Y."/>
            <person name="Ozaki K."/>
            <person name="Hirao M."/>
            <person name="Ohmori Y."/>
            <person name="Kawabata A."/>
            <person name="Hikiji T."/>
            <person name="Kobatake N."/>
            <person name="Inagaki H."/>
            <person name="Ikema Y."/>
            <person name="Okamoto S."/>
            <person name="Okitani R."/>
            <person name="Kawakami T."/>
            <person name="Noguchi S."/>
            <person name="Itoh T."/>
            <person name="Shigeta K."/>
            <person name="Senba T."/>
            <person name="Matsumura K."/>
            <person name="Nakajima Y."/>
            <person name="Mizuno T."/>
            <person name="Morinaga M."/>
            <person name="Sasaki M."/>
            <person name="Togashi T."/>
            <person name="Oyama M."/>
            <person name="Hata H."/>
            <person name="Watanabe M."/>
            <person name="Komatsu T."/>
            <person name="Mizushima-Sugano J."/>
            <person name="Satoh T."/>
            <person name="Shirai Y."/>
            <person name="Takahashi Y."/>
            <person name="Nakagawa K."/>
            <person name="Okumura K."/>
            <person name="Nagase T."/>
            <person name="Nomura N."/>
            <person name="Kikuchi H."/>
            <person name="Masuho Y."/>
            <person name="Yamashita R."/>
            <person name="Nakai K."/>
            <person name="Yada T."/>
            <person name="Nakamura Y."/>
            <person name="Ohara O."/>
            <person name="Isogai T."/>
            <person name="Sugano S."/>
        </authorList>
    </citation>
    <scope>NUCLEOTIDE SEQUENCE [LARGE SCALE MRNA] (ISOFORM 4)</scope>
    <source>
        <tissue>Trachea</tissue>
    </source>
</reference>
<reference key="6">
    <citation type="submission" date="2004-06" db="EMBL/GenBank/DDBJ databases">
        <authorList>
            <consortium name="SeattleSNPs variation discovery resource"/>
        </authorList>
    </citation>
    <scope>NUCLEOTIDE SEQUENCE [GENOMIC DNA]</scope>
    <scope>VARIANTS VAL-129 AND ALA-262</scope>
</reference>
<reference key="7">
    <citation type="journal article" date="2006" name="Nature">
        <title>The DNA sequence, annotation and analysis of human chromosome 3.</title>
        <authorList>
            <person name="Muzny D.M."/>
            <person name="Scherer S.E."/>
            <person name="Kaul R."/>
            <person name="Wang J."/>
            <person name="Yu J."/>
            <person name="Sudbrak R."/>
            <person name="Buhay C.J."/>
            <person name="Chen R."/>
            <person name="Cree A."/>
            <person name="Ding Y."/>
            <person name="Dugan-Rocha S."/>
            <person name="Gill R."/>
            <person name="Gunaratne P."/>
            <person name="Harris R.A."/>
            <person name="Hawes A.C."/>
            <person name="Hernandez J."/>
            <person name="Hodgson A.V."/>
            <person name="Hume J."/>
            <person name="Jackson A."/>
            <person name="Khan Z.M."/>
            <person name="Kovar-Smith C."/>
            <person name="Lewis L.R."/>
            <person name="Lozado R.J."/>
            <person name="Metzker M.L."/>
            <person name="Milosavljevic A."/>
            <person name="Miner G.R."/>
            <person name="Morgan M.B."/>
            <person name="Nazareth L.V."/>
            <person name="Scott G."/>
            <person name="Sodergren E."/>
            <person name="Song X.-Z."/>
            <person name="Steffen D."/>
            <person name="Wei S."/>
            <person name="Wheeler D.A."/>
            <person name="Wright M.W."/>
            <person name="Worley K.C."/>
            <person name="Yuan Y."/>
            <person name="Zhang Z."/>
            <person name="Adams C.Q."/>
            <person name="Ansari-Lari M.A."/>
            <person name="Ayele M."/>
            <person name="Brown M.J."/>
            <person name="Chen G."/>
            <person name="Chen Z."/>
            <person name="Clendenning J."/>
            <person name="Clerc-Blankenburg K.P."/>
            <person name="Chen R."/>
            <person name="Chen Z."/>
            <person name="Davis C."/>
            <person name="Delgado O."/>
            <person name="Dinh H.H."/>
            <person name="Dong W."/>
            <person name="Draper H."/>
            <person name="Ernst S."/>
            <person name="Fu G."/>
            <person name="Gonzalez-Garay M.L."/>
            <person name="Garcia D.K."/>
            <person name="Gillett W."/>
            <person name="Gu J."/>
            <person name="Hao B."/>
            <person name="Haugen E."/>
            <person name="Havlak P."/>
            <person name="He X."/>
            <person name="Hennig S."/>
            <person name="Hu S."/>
            <person name="Huang W."/>
            <person name="Jackson L.R."/>
            <person name="Jacob L.S."/>
            <person name="Kelly S.H."/>
            <person name="Kube M."/>
            <person name="Levy R."/>
            <person name="Li Z."/>
            <person name="Liu B."/>
            <person name="Liu J."/>
            <person name="Liu W."/>
            <person name="Lu J."/>
            <person name="Maheshwari M."/>
            <person name="Nguyen B.-V."/>
            <person name="Okwuonu G.O."/>
            <person name="Palmeiri A."/>
            <person name="Pasternak S."/>
            <person name="Perez L.M."/>
            <person name="Phelps K.A."/>
            <person name="Plopper F.J."/>
            <person name="Qiang B."/>
            <person name="Raymond C."/>
            <person name="Rodriguez R."/>
            <person name="Saenphimmachak C."/>
            <person name="Santibanez J."/>
            <person name="Shen H."/>
            <person name="Shen Y."/>
            <person name="Subramanian S."/>
            <person name="Tabor P.E."/>
            <person name="Verduzco D."/>
            <person name="Waldron L."/>
            <person name="Wang J."/>
            <person name="Wang J."/>
            <person name="Wang Q."/>
            <person name="Williams G.A."/>
            <person name="Wong G.K.-S."/>
            <person name="Yao Z."/>
            <person name="Zhang J."/>
            <person name="Zhang X."/>
            <person name="Zhao G."/>
            <person name="Zhou J."/>
            <person name="Zhou Y."/>
            <person name="Nelson D."/>
            <person name="Lehrach H."/>
            <person name="Reinhardt R."/>
            <person name="Naylor S.L."/>
            <person name="Yang H."/>
            <person name="Olson M."/>
            <person name="Weinstock G."/>
            <person name="Gibbs R.A."/>
        </authorList>
    </citation>
    <scope>NUCLEOTIDE SEQUENCE [LARGE SCALE GENOMIC DNA]</scope>
</reference>
<reference key="8">
    <citation type="journal article" date="1997" name="J. Immunol.">
        <title>Attenuation of IL-5-mediated signal transduction, eosinophil survival, and inflammatory mediator release by a soluble human IL-5 receptor.</title>
        <authorList>
            <person name="Monahan J."/>
            <person name="Siegel N."/>
            <person name="Keith R."/>
            <person name="Caparon M."/>
            <person name="Christine L."/>
            <person name="Compton R."/>
            <person name="Cusik S."/>
            <person name="Hirsch J."/>
            <person name="Huynh M."/>
            <person name="Devine C."/>
            <person name="Polazzi J."/>
            <person name="Rangwala S."/>
            <person name="Tsai B."/>
            <person name="Portanova J."/>
        </authorList>
    </citation>
    <scope>FUNCTION</scope>
</reference>
<reference key="9">
    <citation type="journal article" date="1998" name="Blood">
        <title>JAK2 and JAK1 constitutively associate with an interleukin-5 (IL-5) receptor alpha and betac subunit, respectively, and are activated upon IL-5 stimulation.</title>
        <authorList>
            <person name="Ogata N."/>
            <person name="Kouro T."/>
            <person name="Yamada A."/>
            <person name="Koike M."/>
            <person name="Hanai N."/>
            <person name="Ishikawa T."/>
            <person name="Takatsu K."/>
        </authorList>
    </citation>
    <scope>FUNCTION</scope>
    <scope>INTERACTION WITH CSF2RB AND JAK2</scope>
</reference>
<reference key="10">
    <citation type="journal article" date="2003" name="Structure">
        <title>Molecular roots of degenerate specificity in syntenin's PDZ2 domain: reassessment of the PDZ recognition paradigm.</title>
        <authorList>
            <person name="Kang B.S."/>
            <person name="Cooper D.R."/>
            <person name="Devedjiev Y."/>
            <person name="Derewenda U."/>
            <person name="Derewenda Z.S."/>
        </authorList>
    </citation>
    <scope>X-RAY CRYSTALLOGRAPHY (1.35 ANGSTROMS) OF 413-420 IN COMPLEX WITH SDCBP</scope>
</reference>
<reference key="11">
    <citation type="journal article" date="2011" name="Structure">
        <title>Structure analysis of the IL-5 ligand-receptor complex reveals a wrench-like architecture for IL-5Ralpha.</title>
        <authorList>
            <person name="Patino E."/>
            <person name="Kotzsch A."/>
            <person name="Saremba S."/>
            <person name="Nickel J."/>
            <person name="Schmitz W."/>
            <person name="Sebald W."/>
            <person name="Mueller T.D."/>
        </authorList>
    </citation>
    <scope>X-RAY CRYSTALLOGRAPHY (2.55 ANGSTROMS) OF 20-332 IN COMPLEX WITH IL5</scope>
    <scope>DISULFIDE BONDS</scope>
</reference>
<reference evidence="17" key="12">
    <citation type="journal article" date="2012" name="Protein Sci.">
        <title>Structural basis of interleukin-5 dimer recognition by its alpha receptor.</title>
        <authorList>
            <person name="Kusano S."/>
            <person name="Kukimoto-Niino M."/>
            <person name="Hino N."/>
            <person name="Ohsawa N."/>
            <person name="Ikutani M."/>
            <person name="Takaki S."/>
            <person name="Sakamoto K."/>
            <person name="Hara-Yokoyama M."/>
            <person name="Shirouzu M."/>
            <person name="Takatsu K."/>
            <person name="Yokoyama S."/>
        </authorList>
    </citation>
    <scope>X-RAY CRYSTALLOGRAPHY (2.70 ANGSTROMS) OF 23-134 IN COMPLEX WITH IL5</scope>
    <scope>SUBUNIT</scope>
    <scope>FUNCTION</scope>
</reference>
<feature type="signal peptide">
    <location>
        <begin position="1"/>
        <end position="20"/>
    </location>
</feature>
<feature type="chain" id="PRO_0000010893" description="Interleukin-5 receptor subunit alpha">
    <location>
        <begin position="21"/>
        <end position="420"/>
    </location>
</feature>
<feature type="topological domain" description="Extracellular" evidence="1">
    <location>
        <begin position="21"/>
        <end position="342"/>
    </location>
</feature>
<feature type="transmembrane region" description="Helical" evidence="1">
    <location>
        <begin position="343"/>
        <end position="362"/>
    </location>
</feature>
<feature type="topological domain" description="Cytoplasmic" evidence="1">
    <location>
        <begin position="363"/>
        <end position="420"/>
    </location>
</feature>
<feature type="domain" description="Fibronectin type-III 1" evidence="2">
    <location>
        <begin position="32"/>
        <end position="123"/>
    </location>
</feature>
<feature type="domain" description="Fibronectin type-III 2" evidence="2">
    <location>
        <begin position="241"/>
        <end position="334"/>
    </location>
</feature>
<feature type="short sequence motif" description="WSXWS motif">
    <location>
        <begin position="322"/>
        <end position="326"/>
    </location>
</feature>
<feature type="short sequence motif" description="Box 1 motif">
    <location>
        <begin position="371"/>
        <end position="379"/>
    </location>
</feature>
<feature type="glycosylation site" description="N-linked (GlcNAc...) asparagine" evidence="1">
    <location>
        <position position="35"/>
    </location>
</feature>
<feature type="glycosylation site" description="N-linked (GlcNAc...) asparagine" evidence="1">
    <location>
        <position position="131"/>
    </location>
</feature>
<feature type="glycosylation site" description="N-linked (GlcNAc...) asparagine" evidence="1">
    <location>
        <position position="216"/>
    </location>
</feature>
<feature type="glycosylation site" description="N-linked (GlcNAc...) asparagine" evidence="1">
    <location>
        <position position="244"/>
    </location>
</feature>
<feature type="disulfide bond" evidence="6">
    <location>
        <begin position="134"/>
        <end position="155"/>
    </location>
</feature>
<feature type="disulfide bond" evidence="6">
    <location>
        <begin position="182"/>
        <end position="196"/>
    </location>
</feature>
<feature type="disulfide bond" evidence="6">
    <location>
        <begin position="269"/>
        <end position="316"/>
    </location>
</feature>
<feature type="splice variant" id="VSP_047762" description="In isoform 5." evidence="15">
    <location>
        <begin position="123"/>
        <end position="331"/>
    </location>
</feature>
<feature type="splice variant" id="VSP_001678" description="In isoform 2." evidence="14">
    <original>NDE</original>
    <variation>FSR</variation>
    <location>
        <begin position="333"/>
        <end position="335"/>
    </location>
</feature>
<feature type="splice variant" id="VSP_001680" description="In isoform 3." evidence="12 13">
    <original>N</original>
    <variation>K</variation>
    <location>
        <position position="333"/>
    </location>
</feature>
<feature type="splice variant" id="VSP_001681" description="In isoform 3." evidence="12 13">
    <location>
        <begin position="334"/>
        <end position="420"/>
    </location>
</feature>
<feature type="splice variant" id="VSP_001679" description="In isoform 2." evidence="14">
    <location>
        <begin position="336"/>
        <end position="420"/>
    </location>
</feature>
<feature type="splice variant" id="VSP_046742" description="In isoform 4." evidence="11">
    <original>CHLWIKLFPPIPAPKSNIKDLFVTTNYEKAGSSETEIEVICYIEKPGVETLEDSVF</original>
    <variation>KLGPVRRKLKSSVI</variation>
    <location>
        <begin position="365"/>
        <end position="420"/>
    </location>
</feature>
<feature type="sequence variant" id="VAR_020654" description="In dbSNP:rs2290610." evidence="5 10">
    <original>I</original>
    <variation>V</variation>
    <location>
        <position position="129"/>
    </location>
</feature>
<feature type="sequence variant" id="VAR_020655" description="In dbSNP:rs17879690." evidence="10">
    <original>V</original>
    <variation>A</variation>
    <location>
        <position position="262"/>
    </location>
</feature>
<feature type="sequence conflict" description="In Ref. 1; AAA36110 and 2; AAA59151/AAA59152." evidence="16" ref="1 2">
    <original>A</original>
    <variation>S</variation>
    <location>
        <position position="212"/>
    </location>
</feature>
<feature type="strand" evidence="18">
    <location>
        <begin position="34"/>
        <end position="42"/>
    </location>
</feature>
<feature type="strand" evidence="18">
    <location>
        <begin position="45"/>
        <end position="51"/>
    </location>
</feature>
<feature type="strand" evidence="20">
    <location>
        <begin position="54"/>
        <end position="56"/>
    </location>
</feature>
<feature type="strand" evidence="18">
    <location>
        <begin position="59"/>
        <end position="61"/>
    </location>
</feature>
<feature type="strand" evidence="18">
    <location>
        <begin position="64"/>
        <end position="73"/>
    </location>
</feature>
<feature type="strand" evidence="18">
    <location>
        <begin position="75"/>
        <end position="87"/>
    </location>
</feature>
<feature type="strand" evidence="18">
    <location>
        <begin position="94"/>
        <end position="103"/>
    </location>
</feature>
<feature type="strand" evidence="18">
    <location>
        <begin position="108"/>
        <end position="110"/>
    </location>
</feature>
<feature type="strand" evidence="18">
    <location>
        <begin position="114"/>
        <end position="118"/>
    </location>
</feature>
<feature type="strand" evidence="19">
    <location>
        <begin position="122"/>
        <end position="124"/>
    </location>
</feature>
<feature type="helix" evidence="18">
    <location>
        <begin position="125"/>
        <end position="127"/>
    </location>
</feature>
<feature type="strand" evidence="18">
    <location>
        <begin position="130"/>
        <end position="140"/>
    </location>
</feature>
<feature type="strand" evidence="18">
    <location>
        <begin position="144"/>
        <end position="146"/>
    </location>
</feature>
<feature type="strand" evidence="18">
    <location>
        <begin position="149"/>
        <end position="158"/>
    </location>
</feature>
<feature type="strand" evidence="18">
    <location>
        <begin position="168"/>
        <end position="175"/>
    </location>
</feature>
<feature type="strand" evidence="18">
    <location>
        <begin position="178"/>
        <end position="181"/>
    </location>
</feature>
<feature type="strand" evidence="18">
    <location>
        <begin position="185"/>
        <end position="187"/>
    </location>
</feature>
<feature type="strand" evidence="20">
    <location>
        <begin position="189"/>
        <end position="191"/>
    </location>
</feature>
<feature type="strand" evidence="18">
    <location>
        <begin position="193"/>
        <end position="200"/>
    </location>
</feature>
<feature type="strand" evidence="18">
    <location>
        <begin position="209"/>
        <end position="218"/>
    </location>
</feature>
<feature type="strand" evidence="20">
    <location>
        <begin position="220"/>
        <end position="222"/>
    </location>
</feature>
<feature type="strand" evidence="18">
    <location>
        <begin position="227"/>
        <end position="232"/>
    </location>
</feature>
<feature type="helix" evidence="18">
    <location>
        <begin position="233"/>
        <end position="236"/>
    </location>
</feature>
<feature type="strand" evidence="18">
    <location>
        <begin position="243"/>
        <end position="250"/>
    </location>
</feature>
<feature type="strand" evidence="18">
    <location>
        <begin position="253"/>
        <end position="259"/>
    </location>
</feature>
<feature type="strand" evidence="18">
    <location>
        <begin position="262"/>
        <end position="265"/>
    </location>
</feature>
<feature type="helix" evidence="18">
    <location>
        <begin position="267"/>
        <end position="269"/>
    </location>
</feature>
<feature type="strand" evidence="18">
    <location>
        <begin position="270"/>
        <end position="278"/>
    </location>
</feature>
<feature type="turn" evidence="18">
    <location>
        <begin position="279"/>
        <end position="281"/>
    </location>
</feature>
<feature type="strand" evidence="18">
    <location>
        <begin position="284"/>
        <end position="297"/>
    </location>
</feature>
<feature type="strand" evidence="18">
    <location>
        <begin position="304"/>
        <end position="312"/>
    </location>
</feature>
<feature type="turn" evidence="18">
    <location>
        <begin position="314"/>
        <end position="316"/>
    </location>
</feature>
<feature type="strand" evidence="18">
    <location>
        <begin position="329"/>
        <end position="331"/>
    </location>
</feature>